<organism>
    <name type="scientific">Chlorobium chlorochromatii (strain CaD3)</name>
    <dbReference type="NCBI Taxonomy" id="340177"/>
    <lineage>
        <taxon>Bacteria</taxon>
        <taxon>Pseudomonadati</taxon>
        <taxon>Chlorobiota</taxon>
        <taxon>Chlorobiia</taxon>
        <taxon>Chlorobiales</taxon>
        <taxon>Chlorobiaceae</taxon>
        <taxon>Chlorobium/Pelodictyon group</taxon>
        <taxon>Chlorobium</taxon>
    </lineage>
</organism>
<protein>
    <recommendedName>
        <fullName evidence="1">Cysteine--tRNA ligase</fullName>
        <ecNumber evidence="1">6.1.1.16</ecNumber>
    </recommendedName>
    <alternativeName>
        <fullName evidence="1">Cysteinyl-tRNA synthetase</fullName>
        <shortName evidence="1">CysRS</shortName>
    </alternativeName>
</protein>
<gene>
    <name evidence="1" type="primary">cysS</name>
    <name type="ordered locus">Cag_1818</name>
</gene>
<name>SYC_CHLCH</name>
<evidence type="ECO:0000255" key="1">
    <source>
        <dbReference type="HAMAP-Rule" id="MF_00041"/>
    </source>
</evidence>
<dbReference type="EC" id="6.1.1.16" evidence="1"/>
<dbReference type="EMBL" id="CP000108">
    <property type="protein sequence ID" value="ABB29069.1"/>
    <property type="molecule type" value="Genomic_DNA"/>
</dbReference>
<dbReference type="SMR" id="Q3APK6"/>
<dbReference type="STRING" id="340177.Cag_1818"/>
<dbReference type="KEGG" id="cch:Cag_1818"/>
<dbReference type="eggNOG" id="COG0215">
    <property type="taxonomic scope" value="Bacteria"/>
</dbReference>
<dbReference type="HOGENOM" id="CLU_013528_0_1_10"/>
<dbReference type="OrthoDB" id="9815130at2"/>
<dbReference type="GO" id="GO:0005829">
    <property type="term" value="C:cytosol"/>
    <property type="evidence" value="ECO:0007669"/>
    <property type="project" value="TreeGrafter"/>
</dbReference>
<dbReference type="GO" id="GO:0005524">
    <property type="term" value="F:ATP binding"/>
    <property type="evidence" value="ECO:0007669"/>
    <property type="project" value="UniProtKB-UniRule"/>
</dbReference>
<dbReference type="GO" id="GO:0004817">
    <property type="term" value="F:cysteine-tRNA ligase activity"/>
    <property type="evidence" value="ECO:0007669"/>
    <property type="project" value="UniProtKB-UniRule"/>
</dbReference>
<dbReference type="GO" id="GO:0008270">
    <property type="term" value="F:zinc ion binding"/>
    <property type="evidence" value="ECO:0007669"/>
    <property type="project" value="UniProtKB-UniRule"/>
</dbReference>
<dbReference type="GO" id="GO:0006423">
    <property type="term" value="P:cysteinyl-tRNA aminoacylation"/>
    <property type="evidence" value="ECO:0007669"/>
    <property type="project" value="UniProtKB-UniRule"/>
</dbReference>
<dbReference type="CDD" id="cd00672">
    <property type="entry name" value="CysRS_core"/>
    <property type="match status" value="1"/>
</dbReference>
<dbReference type="Gene3D" id="1.20.120.1910">
    <property type="entry name" value="Cysteine-tRNA ligase, C-terminal anti-codon recognition domain"/>
    <property type="match status" value="1"/>
</dbReference>
<dbReference type="Gene3D" id="3.40.50.620">
    <property type="entry name" value="HUPs"/>
    <property type="match status" value="1"/>
</dbReference>
<dbReference type="HAMAP" id="MF_00041">
    <property type="entry name" value="Cys_tRNA_synth"/>
    <property type="match status" value="1"/>
</dbReference>
<dbReference type="InterPro" id="IPR015803">
    <property type="entry name" value="Cys-tRNA-ligase"/>
</dbReference>
<dbReference type="InterPro" id="IPR015273">
    <property type="entry name" value="Cys-tRNA-synt_Ia_DALR"/>
</dbReference>
<dbReference type="InterPro" id="IPR024909">
    <property type="entry name" value="Cys-tRNA/MSH_ligase"/>
</dbReference>
<dbReference type="InterPro" id="IPR014729">
    <property type="entry name" value="Rossmann-like_a/b/a_fold"/>
</dbReference>
<dbReference type="InterPro" id="IPR032678">
    <property type="entry name" value="tRNA-synt_1_cat_dom"/>
</dbReference>
<dbReference type="InterPro" id="IPR009080">
    <property type="entry name" value="tRNAsynth_Ia_anticodon-bd"/>
</dbReference>
<dbReference type="NCBIfam" id="TIGR00435">
    <property type="entry name" value="cysS"/>
    <property type="match status" value="1"/>
</dbReference>
<dbReference type="PANTHER" id="PTHR10890:SF3">
    <property type="entry name" value="CYSTEINE--TRNA LIGASE, CYTOPLASMIC"/>
    <property type="match status" value="1"/>
</dbReference>
<dbReference type="PANTHER" id="PTHR10890">
    <property type="entry name" value="CYSTEINYL-TRNA SYNTHETASE"/>
    <property type="match status" value="1"/>
</dbReference>
<dbReference type="Pfam" id="PF09190">
    <property type="entry name" value="DALR_2"/>
    <property type="match status" value="1"/>
</dbReference>
<dbReference type="Pfam" id="PF01406">
    <property type="entry name" value="tRNA-synt_1e"/>
    <property type="match status" value="1"/>
</dbReference>
<dbReference type="PRINTS" id="PR00983">
    <property type="entry name" value="TRNASYNTHCYS"/>
</dbReference>
<dbReference type="SMART" id="SM00840">
    <property type="entry name" value="DALR_2"/>
    <property type="match status" value="1"/>
</dbReference>
<dbReference type="SUPFAM" id="SSF47323">
    <property type="entry name" value="Anticodon-binding domain of a subclass of class I aminoacyl-tRNA synthetases"/>
    <property type="match status" value="1"/>
</dbReference>
<dbReference type="SUPFAM" id="SSF52374">
    <property type="entry name" value="Nucleotidylyl transferase"/>
    <property type="match status" value="1"/>
</dbReference>
<reference key="1">
    <citation type="submission" date="2005-08" db="EMBL/GenBank/DDBJ databases">
        <title>Complete sequence of Chlorobium chlorochromatii CaD3.</title>
        <authorList>
            <consortium name="US DOE Joint Genome Institute"/>
            <person name="Copeland A."/>
            <person name="Lucas S."/>
            <person name="Lapidus A."/>
            <person name="Barry K."/>
            <person name="Detter J.C."/>
            <person name="Glavina T."/>
            <person name="Hammon N."/>
            <person name="Israni S."/>
            <person name="Pitluck S."/>
            <person name="Bryant D."/>
            <person name="Schmutz J."/>
            <person name="Larimer F."/>
            <person name="Land M."/>
            <person name="Kyrpides N."/>
            <person name="Ivanova N."/>
            <person name="Richardson P."/>
        </authorList>
    </citation>
    <scope>NUCLEOTIDE SEQUENCE [LARGE SCALE GENOMIC DNA]</scope>
    <source>
        <strain>CaD3</strain>
    </source>
</reference>
<comment type="catalytic activity">
    <reaction evidence="1">
        <text>tRNA(Cys) + L-cysteine + ATP = L-cysteinyl-tRNA(Cys) + AMP + diphosphate</text>
        <dbReference type="Rhea" id="RHEA:17773"/>
        <dbReference type="Rhea" id="RHEA-COMP:9661"/>
        <dbReference type="Rhea" id="RHEA-COMP:9679"/>
        <dbReference type="ChEBI" id="CHEBI:30616"/>
        <dbReference type="ChEBI" id="CHEBI:33019"/>
        <dbReference type="ChEBI" id="CHEBI:35235"/>
        <dbReference type="ChEBI" id="CHEBI:78442"/>
        <dbReference type="ChEBI" id="CHEBI:78517"/>
        <dbReference type="ChEBI" id="CHEBI:456215"/>
        <dbReference type="EC" id="6.1.1.16"/>
    </reaction>
</comment>
<comment type="cofactor">
    <cofactor evidence="1">
        <name>Zn(2+)</name>
        <dbReference type="ChEBI" id="CHEBI:29105"/>
    </cofactor>
    <text evidence="1">Binds 1 zinc ion per subunit.</text>
</comment>
<comment type="subunit">
    <text evidence="1">Monomer.</text>
</comment>
<comment type="subcellular location">
    <subcellularLocation>
        <location evidence="1">Cytoplasm</location>
    </subcellularLocation>
</comment>
<comment type="similarity">
    <text evidence="1">Belongs to the class-I aminoacyl-tRNA synthetase family.</text>
</comment>
<feature type="chain" id="PRO_0000240903" description="Cysteine--tRNA ligase">
    <location>
        <begin position="1"/>
        <end position="480"/>
    </location>
</feature>
<feature type="short sequence motif" description="'HIGH' region">
    <location>
        <begin position="31"/>
        <end position="41"/>
    </location>
</feature>
<feature type="short sequence motif" description="'KMSKS' region">
    <location>
        <begin position="278"/>
        <end position="282"/>
    </location>
</feature>
<feature type="binding site" evidence="1">
    <location>
        <position position="29"/>
    </location>
    <ligand>
        <name>Zn(2+)</name>
        <dbReference type="ChEBI" id="CHEBI:29105"/>
    </ligand>
</feature>
<feature type="binding site" evidence="1">
    <location>
        <position position="221"/>
    </location>
    <ligand>
        <name>Zn(2+)</name>
        <dbReference type="ChEBI" id="CHEBI:29105"/>
    </ligand>
</feature>
<feature type="binding site" evidence="1">
    <location>
        <position position="246"/>
    </location>
    <ligand>
        <name>Zn(2+)</name>
        <dbReference type="ChEBI" id="CHEBI:29105"/>
    </ligand>
</feature>
<feature type="binding site" evidence="1">
    <location>
        <position position="250"/>
    </location>
    <ligand>
        <name>Zn(2+)</name>
        <dbReference type="ChEBI" id="CHEBI:29105"/>
    </ligand>
</feature>
<feature type="binding site" evidence="1">
    <location>
        <position position="281"/>
    </location>
    <ligand>
        <name>ATP</name>
        <dbReference type="ChEBI" id="CHEBI:30616"/>
    </ligand>
</feature>
<keyword id="KW-0030">Aminoacyl-tRNA synthetase</keyword>
<keyword id="KW-0067">ATP-binding</keyword>
<keyword id="KW-0963">Cytoplasm</keyword>
<keyword id="KW-0436">Ligase</keyword>
<keyword id="KW-0479">Metal-binding</keyword>
<keyword id="KW-0547">Nucleotide-binding</keyword>
<keyword id="KW-0648">Protein biosynthesis</keyword>
<keyword id="KW-0862">Zinc</keyword>
<proteinExistence type="inferred from homology"/>
<sequence length="480" mass="53708">MALAIYNSLSRTKEIFEPLHSGVVSIYVCGPTVYGHAHLGHAKSYISFDVVVRWFRQSGYKVKYIQNITDVGHLTDDADEGEDKIMKQARLEKTDPMEIAQFYTRSFYEDMDRLGVERPNIAPTATAHIPEQIALVETLLRKGYAYEVNGNVYFSVNSFAGYGKLSGRTDQEALQSGSRVGIRSEKRDASDFALWKKAEEGHIMKWQSPWSVGYPGWHLECSAMAMKYLGETIDIHGGGMENKFPHHECEIAQSEAATGKPYVRYWMHNNMVTVNGTKMGKSLKNFVNLKELLQTRNPLALRFFILQSHYRSPLDYSEAALDAAAQGLEKLHETLRRFRHQAAGSGSLDVTPYAERFSEAMNDDFNTPIAIAVLFDLSKAINSALDSKGIVEADRAAIEAFLTIAATNTLGIASNNLADEQSNGNSMQRLDKVMQIMLELRHNARKQKDFATSDKIRDMLLAAGIEIKDTKEGAVWSVKG</sequence>
<accession>Q3APK6</accession>